<reference key="1">
    <citation type="journal article" date="2011" name="Stand. Genomic Sci.">
        <title>Complete genome sequence of the halophilic and highly halotolerant Chromohalobacter salexigens type strain (1H11(T)).</title>
        <authorList>
            <person name="Copeland A."/>
            <person name="O'Connor K."/>
            <person name="Lucas S."/>
            <person name="Lapidus A."/>
            <person name="Berry K.W."/>
            <person name="Detter J.C."/>
            <person name="Del Rio T.G."/>
            <person name="Hammon N."/>
            <person name="Dalin E."/>
            <person name="Tice H."/>
            <person name="Pitluck S."/>
            <person name="Bruce D."/>
            <person name="Goodwin L."/>
            <person name="Han C."/>
            <person name="Tapia R."/>
            <person name="Saunders E."/>
            <person name="Schmutz J."/>
            <person name="Brettin T."/>
            <person name="Larimer F."/>
            <person name="Land M."/>
            <person name="Hauser L."/>
            <person name="Vargas C."/>
            <person name="Nieto J.J."/>
            <person name="Kyrpides N.C."/>
            <person name="Ivanova N."/>
            <person name="Goker M."/>
            <person name="Klenk H.P."/>
            <person name="Csonka L.N."/>
            <person name="Woyke T."/>
        </authorList>
    </citation>
    <scope>NUCLEOTIDE SEQUENCE [LARGE SCALE GENOMIC DNA]</scope>
    <source>
        <strain>ATCC BAA-138 / DSM 3043 / CIP 106854 / NCIMB 13768 / 1H11</strain>
    </source>
</reference>
<feature type="chain" id="PRO_1000009200" description="UPF0102 protein Csal_2201">
    <location>
        <begin position="1"/>
        <end position="123"/>
    </location>
</feature>
<name>Y2201_CHRSD</name>
<accession>Q1QVF6</accession>
<dbReference type="EMBL" id="CP000285">
    <property type="protein sequence ID" value="ABE59552.1"/>
    <property type="molecule type" value="Genomic_DNA"/>
</dbReference>
<dbReference type="RefSeq" id="WP_011507498.1">
    <property type="nucleotide sequence ID" value="NC_007963.1"/>
</dbReference>
<dbReference type="SMR" id="Q1QVF6"/>
<dbReference type="STRING" id="290398.Csal_2201"/>
<dbReference type="GeneID" id="95334919"/>
<dbReference type="KEGG" id="csa:Csal_2201"/>
<dbReference type="eggNOG" id="COG0792">
    <property type="taxonomic scope" value="Bacteria"/>
</dbReference>
<dbReference type="HOGENOM" id="CLU_115353_1_0_6"/>
<dbReference type="OrthoDB" id="9794876at2"/>
<dbReference type="Proteomes" id="UP000000239">
    <property type="component" value="Chromosome"/>
</dbReference>
<dbReference type="GO" id="GO:0003676">
    <property type="term" value="F:nucleic acid binding"/>
    <property type="evidence" value="ECO:0007669"/>
    <property type="project" value="InterPro"/>
</dbReference>
<dbReference type="CDD" id="cd20736">
    <property type="entry name" value="PoNe_Nuclease"/>
    <property type="match status" value="1"/>
</dbReference>
<dbReference type="Gene3D" id="3.40.1350.10">
    <property type="match status" value="1"/>
</dbReference>
<dbReference type="HAMAP" id="MF_00048">
    <property type="entry name" value="UPF0102"/>
    <property type="match status" value="1"/>
</dbReference>
<dbReference type="InterPro" id="IPR011335">
    <property type="entry name" value="Restrct_endonuc-II-like"/>
</dbReference>
<dbReference type="InterPro" id="IPR011856">
    <property type="entry name" value="tRNA_endonuc-like_dom_sf"/>
</dbReference>
<dbReference type="InterPro" id="IPR003509">
    <property type="entry name" value="UPF0102_YraN-like"/>
</dbReference>
<dbReference type="NCBIfam" id="NF009150">
    <property type="entry name" value="PRK12497.1-3"/>
    <property type="match status" value="1"/>
</dbReference>
<dbReference type="NCBIfam" id="TIGR00252">
    <property type="entry name" value="YraN family protein"/>
    <property type="match status" value="1"/>
</dbReference>
<dbReference type="PANTHER" id="PTHR34039">
    <property type="entry name" value="UPF0102 PROTEIN YRAN"/>
    <property type="match status" value="1"/>
</dbReference>
<dbReference type="PANTHER" id="PTHR34039:SF1">
    <property type="entry name" value="UPF0102 PROTEIN YRAN"/>
    <property type="match status" value="1"/>
</dbReference>
<dbReference type="Pfam" id="PF02021">
    <property type="entry name" value="UPF0102"/>
    <property type="match status" value="1"/>
</dbReference>
<dbReference type="SUPFAM" id="SSF52980">
    <property type="entry name" value="Restriction endonuclease-like"/>
    <property type="match status" value="1"/>
</dbReference>
<evidence type="ECO:0000255" key="1">
    <source>
        <dbReference type="HAMAP-Rule" id="MF_00048"/>
    </source>
</evidence>
<gene>
    <name type="ordered locus">Csal_2201</name>
</gene>
<sequence length="123" mass="14112">MSNSNNDSRRRGLEMERRAADWLASHGLRLVDANQHARRGEIDLIMRDGDTLVFIEVRHRRDARHGHPFETVTAAKQRRLIGAARFYLHRNGLSCACRFDVVGVTGTPPHLSFEWIRSAFDAF</sequence>
<protein>
    <recommendedName>
        <fullName evidence="1">UPF0102 protein Csal_2201</fullName>
    </recommendedName>
</protein>
<keyword id="KW-1185">Reference proteome</keyword>
<comment type="similarity">
    <text evidence="1">Belongs to the UPF0102 family.</text>
</comment>
<organism>
    <name type="scientific">Chromohalobacter salexigens (strain ATCC BAA-138 / DSM 3043 / CIP 106854 / NCIMB 13768 / 1H11)</name>
    <dbReference type="NCBI Taxonomy" id="290398"/>
    <lineage>
        <taxon>Bacteria</taxon>
        <taxon>Pseudomonadati</taxon>
        <taxon>Pseudomonadota</taxon>
        <taxon>Gammaproteobacteria</taxon>
        <taxon>Oceanospirillales</taxon>
        <taxon>Halomonadaceae</taxon>
        <taxon>Chromohalobacter</taxon>
    </lineage>
</organism>
<proteinExistence type="inferred from homology"/>